<evidence type="ECO:0000250" key="1"/>
<evidence type="ECO:0000255" key="2"/>
<evidence type="ECO:0000305" key="3"/>
<dbReference type="EMBL" id="BC109477">
    <property type="protein sequence ID" value="AAI09478.1"/>
    <property type="molecule type" value="mRNA"/>
</dbReference>
<dbReference type="RefSeq" id="NP_001033309.1">
    <property type="nucleotide sequence ID" value="NM_001038220.1"/>
</dbReference>
<dbReference type="RefSeq" id="XP_059745242.1">
    <property type="nucleotide sequence ID" value="XM_059889259.1"/>
</dbReference>
<dbReference type="RefSeq" id="XP_059745243.1">
    <property type="nucleotide sequence ID" value="XM_059889260.1"/>
</dbReference>
<dbReference type="SMR" id="Q32LP9"/>
<dbReference type="FunCoup" id="Q32LP9">
    <property type="interactions" value="123"/>
</dbReference>
<dbReference type="STRING" id="9913.ENSBTAP00000016014"/>
<dbReference type="PaxDb" id="9913-ENSBTAP00000016014"/>
<dbReference type="GeneID" id="617620"/>
<dbReference type="KEGG" id="bta:617620"/>
<dbReference type="CTD" id="7464"/>
<dbReference type="VEuPathDB" id="HostDB:ENSBTAG00000007659"/>
<dbReference type="eggNOG" id="KOG0303">
    <property type="taxonomic scope" value="Eukaryota"/>
</dbReference>
<dbReference type="HOGENOM" id="CLU_026859_4_0_1"/>
<dbReference type="InParanoid" id="Q32LP9"/>
<dbReference type="OMA" id="TSCEIFR"/>
<dbReference type="OrthoDB" id="1850764at2759"/>
<dbReference type="TreeFam" id="TF314280"/>
<dbReference type="Proteomes" id="UP000009136">
    <property type="component" value="Chromosome 8"/>
</dbReference>
<dbReference type="Bgee" id="ENSBTAG00000007659">
    <property type="expression patterns" value="Expressed in jejunum and 101 other cell types or tissues"/>
</dbReference>
<dbReference type="GO" id="GO:0051015">
    <property type="term" value="F:actin filament binding"/>
    <property type="evidence" value="ECO:0000318"/>
    <property type="project" value="GO_Central"/>
</dbReference>
<dbReference type="FunFam" id="2.130.10.10:FF:000053">
    <property type="entry name" value="Coronin"/>
    <property type="match status" value="1"/>
</dbReference>
<dbReference type="Gene3D" id="2.130.10.10">
    <property type="entry name" value="YVTN repeat-like/Quinoprotein amine dehydrogenase"/>
    <property type="match status" value="1"/>
</dbReference>
<dbReference type="InterPro" id="IPR015505">
    <property type="entry name" value="Coronin"/>
</dbReference>
<dbReference type="InterPro" id="IPR015048">
    <property type="entry name" value="DUF1899"/>
</dbReference>
<dbReference type="InterPro" id="IPR015943">
    <property type="entry name" value="WD40/YVTN_repeat-like_dom_sf"/>
</dbReference>
<dbReference type="InterPro" id="IPR019775">
    <property type="entry name" value="WD40_repeat_CS"/>
</dbReference>
<dbReference type="InterPro" id="IPR036322">
    <property type="entry name" value="WD40_repeat_dom_sf"/>
</dbReference>
<dbReference type="InterPro" id="IPR001680">
    <property type="entry name" value="WD40_rpt"/>
</dbReference>
<dbReference type="PANTHER" id="PTHR10856">
    <property type="entry name" value="CORONIN"/>
    <property type="match status" value="1"/>
</dbReference>
<dbReference type="PANTHER" id="PTHR10856:SF2">
    <property type="entry name" value="CORONIN-2A"/>
    <property type="match status" value="1"/>
</dbReference>
<dbReference type="Pfam" id="PF08953">
    <property type="entry name" value="DUF1899"/>
    <property type="match status" value="1"/>
</dbReference>
<dbReference type="Pfam" id="PF00400">
    <property type="entry name" value="WD40"/>
    <property type="match status" value="3"/>
</dbReference>
<dbReference type="Pfam" id="PF16300">
    <property type="entry name" value="WD40_4"/>
    <property type="match status" value="1"/>
</dbReference>
<dbReference type="SMART" id="SM01166">
    <property type="entry name" value="DUF1899"/>
    <property type="match status" value="1"/>
</dbReference>
<dbReference type="SMART" id="SM01167">
    <property type="entry name" value="DUF1900"/>
    <property type="match status" value="1"/>
</dbReference>
<dbReference type="SMART" id="SM00320">
    <property type="entry name" value="WD40"/>
    <property type="match status" value="4"/>
</dbReference>
<dbReference type="SUPFAM" id="SSF50978">
    <property type="entry name" value="WD40 repeat-like"/>
    <property type="match status" value="1"/>
</dbReference>
<dbReference type="PROSITE" id="PS00678">
    <property type="entry name" value="WD_REPEATS_1"/>
    <property type="match status" value="2"/>
</dbReference>
<dbReference type="PROSITE" id="PS50082">
    <property type="entry name" value="WD_REPEATS_2"/>
    <property type="match status" value="3"/>
</dbReference>
<dbReference type="PROSITE" id="PS50294">
    <property type="entry name" value="WD_REPEATS_REGION"/>
    <property type="match status" value="1"/>
</dbReference>
<protein>
    <recommendedName>
        <fullName>Coronin-2A</fullName>
    </recommendedName>
</protein>
<comment type="subunit">
    <text evidence="1">Binds actin. Component of the N-Cor repressor complex, at least composed of NCOR1, NCOR2, HDAC3, TBL1X, TBL1R, CORO2A and GPS2.</text>
</comment>
<comment type="similarity">
    <text evidence="3">Belongs to the WD repeat coronin family.</text>
</comment>
<proteinExistence type="evidence at transcript level"/>
<sequence>MSWHPQYRSSKFRHVFGKPASKENCYDSVPITHSVQDNHFCAVNPHFIAVVTECTGGGAFLVIPLHQTGKLDPHYPKVCGHRGNVLDVKWNPFNDFEIASCSEDATIKIWDIPKQLLTKNLTAFRKELVGHARKVGLVEWHPTAANILFSSGYDYKVMVWNLDSKESVIMSPVKTINCHQDVILSMSFNTNGSLLATACKDRKIRVLDPRAGTVLQEANYKGHRANKVLFLGNLKKLLSTGTSRWNNRQMALWDQDDLSVPVTEVDLDGSSGVLFPFYDADTNMLYVVGKGDRNIHYYEISANKPHLNYLMEYHSYNPQKGIGVMPKRGLDVSSCEIFRFYKLITTKSLIEPVSMIVPRRSESYQEDIYPPTASAQPSLTAQEWLSGMNKEPVLMSLRPGAEPLSPQPLPSERTLSMPTAPTSPHLFNQTESLVAEDGRRPFSLLEEKAPRWAAEHRQEEKKTWLSDGFDIFECPPPKTENELLQMFYRQQDEIRRLRELVTQREVQAKQLELEIRNLRMNSPRL</sequence>
<gene>
    <name type="primary">CORO2A</name>
</gene>
<reference key="1">
    <citation type="submission" date="2005-11" db="EMBL/GenBank/DDBJ databases">
        <authorList>
            <consortium name="NIH - Mammalian Gene Collection (MGC) project"/>
        </authorList>
    </citation>
    <scope>NUCLEOTIDE SEQUENCE [LARGE SCALE MRNA]</scope>
    <source>
        <strain>Crossbred X Angus</strain>
        <tissue>Ileum</tissue>
    </source>
</reference>
<keyword id="KW-0009">Actin-binding</keyword>
<keyword id="KW-0175">Coiled coil</keyword>
<keyword id="KW-1185">Reference proteome</keyword>
<keyword id="KW-0677">Repeat</keyword>
<keyword id="KW-0853">WD repeat</keyword>
<name>COR2A_BOVIN</name>
<organism>
    <name type="scientific">Bos taurus</name>
    <name type="common">Bovine</name>
    <dbReference type="NCBI Taxonomy" id="9913"/>
    <lineage>
        <taxon>Eukaryota</taxon>
        <taxon>Metazoa</taxon>
        <taxon>Chordata</taxon>
        <taxon>Craniata</taxon>
        <taxon>Vertebrata</taxon>
        <taxon>Euteleostomi</taxon>
        <taxon>Mammalia</taxon>
        <taxon>Eutheria</taxon>
        <taxon>Laurasiatheria</taxon>
        <taxon>Artiodactyla</taxon>
        <taxon>Ruminantia</taxon>
        <taxon>Pecora</taxon>
        <taxon>Bovidae</taxon>
        <taxon>Bovinae</taxon>
        <taxon>Bos</taxon>
    </lineage>
</organism>
<feature type="chain" id="PRO_0000278202" description="Coronin-2A">
    <location>
        <begin position="1"/>
        <end position="525"/>
    </location>
</feature>
<feature type="repeat" description="WD 1">
    <location>
        <begin position="80"/>
        <end position="120"/>
    </location>
</feature>
<feature type="repeat" description="WD 2">
    <location>
        <begin position="130"/>
        <end position="170"/>
    </location>
</feature>
<feature type="repeat" description="WD 3">
    <location>
        <begin position="178"/>
        <end position="217"/>
    </location>
</feature>
<feature type="repeat" description="WD 4">
    <location>
        <begin position="220"/>
        <end position="263"/>
    </location>
</feature>
<feature type="repeat" description="WD 5">
    <location>
        <begin position="269"/>
        <end position="308"/>
    </location>
</feature>
<feature type="coiled-coil region" evidence="2">
    <location>
        <begin position="485"/>
        <end position="524"/>
    </location>
</feature>
<accession>Q32LP9</accession>